<dbReference type="EC" id="6.3.2.6" evidence="1"/>
<dbReference type="EMBL" id="AM420293">
    <property type="protein sequence ID" value="CAM06308.1"/>
    <property type="molecule type" value="Genomic_DNA"/>
</dbReference>
<dbReference type="RefSeq" id="WP_009948796.1">
    <property type="nucleotide sequence ID" value="NC_009142.1"/>
</dbReference>
<dbReference type="SMR" id="A4FQI3"/>
<dbReference type="STRING" id="405948.SACE_7150"/>
<dbReference type="KEGG" id="sen:SACE_7150"/>
<dbReference type="eggNOG" id="COG0152">
    <property type="taxonomic scope" value="Bacteria"/>
</dbReference>
<dbReference type="HOGENOM" id="CLU_045637_0_0_11"/>
<dbReference type="OrthoDB" id="9801549at2"/>
<dbReference type="UniPathway" id="UPA00074">
    <property type="reaction ID" value="UER00131"/>
</dbReference>
<dbReference type="Proteomes" id="UP000006728">
    <property type="component" value="Chromosome"/>
</dbReference>
<dbReference type="GO" id="GO:0005737">
    <property type="term" value="C:cytoplasm"/>
    <property type="evidence" value="ECO:0007669"/>
    <property type="project" value="TreeGrafter"/>
</dbReference>
<dbReference type="GO" id="GO:0005524">
    <property type="term" value="F:ATP binding"/>
    <property type="evidence" value="ECO:0007669"/>
    <property type="project" value="UniProtKB-KW"/>
</dbReference>
<dbReference type="GO" id="GO:0004639">
    <property type="term" value="F:phosphoribosylaminoimidazolesuccinocarboxamide synthase activity"/>
    <property type="evidence" value="ECO:0007669"/>
    <property type="project" value="UniProtKB-UniRule"/>
</dbReference>
<dbReference type="GO" id="GO:0006189">
    <property type="term" value="P:'de novo' IMP biosynthetic process"/>
    <property type="evidence" value="ECO:0007669"/>
    <property type="project" value="UniProtKB-UniRule"/>
</dbReference>
<dbReference type="CDD" id="cd01414">
    <property type="entry name" value="SAICAR_synt_Sc"/>
    <property type="match status" value="1"/>
</dbReference>
<dbReference type="FunFam" id="3.30.200.20:FF:000199">
    <property type="entry name" value="Phosphoribosylaminoimidazole-succinocarboxamide synthase"/>
    <property type="match status" value="1"/>
</dbReference>
<dbReference type="FunFam" id="3.30.470.20:FF:000015">
    <property type="entry name" value="Phosphoribosylaminoimidazole-succinocarboxamide synthase"/>
    <property type="match status" value="1"/>
</dbReference>
<dbReference type="Gene3D" id="3.30.470.20">
    <property type="entry name" value="ATP-grasp fold, B domain"/>
    <property type="match status" value="1"/>
</dbReference>
<dbReference type="Gene3D" id="3.30.200.20">
    <property type="entry name" value="Phosphorylase Kinase, domain 1"/>
    <property type="match status" value="1"/>
</dbReference>
<dbReference type="HAMAP" id="MF_00137">
    <property type="entry name" value="SAICAR_synth"/>
    <property type="match status" value="1"/>
</dbReference>
<dbReference type="InterPro" id="IPR028923">
    <property type="entry name" value="SAICAR_synt/ADE2_N"/>
</dbReference>
<dbReference type="InterPro" id="IPR001636">
    <property type="entry name" value="SAICAR_synth"/>
</dbReference>
<dbReference type="InterPro" id="IPR018236">
    <property type="entry name" value="SAICAR_synthetase_CS"/>
</dbReference>
<dbReference type="NCBIfam" id="NF010568">
    <property type="entry name" value="PRK13961.1"/>
    <property type="match status" value="1"/>
</dbReference>
<dbReference type="NCBIfam" id="TIGR00081">
    <property type="entry name" value="purC"/>
    <property type="match status" value="1"/>
</dbReference>
<dbReference type="PANTHER" id="PTHR43700">
    <property type="entry name" value="PHOSPHORIBOSYLAMINOIMIDAZOLE-SUCCINOCARBOXAMIDE SYNTHASE"/>
    <property type="match status" value="1"/>
</dbReference>
<dbReference type="PANTHER" id="PTHR43700:SF1">
    <property type="entry name" value="PHOSPHORIBOSYLAMINOIMIDAZOLE-SUCCINOCARBOXAMIDE SYNTHASE"/>
    <property type="match status" value="1"/>
</dbReference>
<dbReference type="Pfam" id="PF01259">
    <property type="entry name" value="SAICAR_synt"/>
    <property type="match status" value="1"/>
</dbReference>
<dbReference type="SUPFAM" id="SSF56104">
    <property type="entry name" value="SAICAR synthase-like"/>
    <property type="match status" value="1"/>
</dbReference>
<dbReference type="PROSITE" id="PS01058">
    <property type="entry name" value="SAICAR_SYNTHETASE_2"/>
    <property type="match status" value="1"/>
</dbReference>
<protein>
    <recommendedName>
        <fullName evidence="1">Phosphoribosylaminoimidazole-succinocarboxamide synthase</fullName>
        <ecNumber evidence="1">6.3.2.6</ecNumber>
    </recommendedName>
    <alternativeName>
        <fullName evidence="1">SAICAR synthetase</fullName>
    </alternativeName>
</protein>
<sequence length="297" mass="32353">MVALADYPQIAAGKVRQLHAVDDEHLLLVASDRISAFDHVLSTPIPDKGRVLTAMSVFWFNLLSDVVPNHLVAWDDPRIPAEVRGRALLVRRLEMLQVECVARGYLTGSGLLDYQRTGAVCGVVLPEGLTEASRLPEPIFTPATKAELGAHDENVSFEAVAEAVGQELAAELRELTLRVYGRAAEHARERGVILADTKFEFGVAGGGALVLGDEVLTPDSSRYWPADGYEPGKVQPSFDKQYVRNWLTSAESGWDRASDTPPPPLPDDVVAATRARYVEAYERITGLDLADWPSPAA</sequence>
<accession>A4FQI3</accession>
<evidence type="ECO:0000255" key="1">
    <source>
        <dbReference type="HAMAP-Rule" id="MF_00137"/>
    </source>
</evidence>
<gene>
    <name evidence="1" type="primary">purC</name>
    <name type="ordered locus">SACE_7150</name>
</gene>
<reference key="1">
    <citation type="journal article" date="2007" name="Nat. Biotechnol.">
        <title>Complete genome sequence of the erythromycin-producing bacterium Saccharopolyspora erythraea NRRL23338.</title>
        <authorList>
            <person name="Oliynyk M."/>
            <person name="Samborskyy M."/>
            <person name="Lester J.B."/>
            <person name="Mironenko T."/>
            <person name="Scott N."/>
            <person name="Dickens S."/>
            <person name="Haydock S.F."/>
            <person name="Leadlay P.F."/>
        </authorList>
    </citation>
    <scope>NUCLEOTIDE SEQUENCE [LARGE SCALE GENOMIC DNA]</scope>
    <source>
        <strain>ATCC 11635 / DSM 40517 / JCM 4748 / NBRC 13426 / NCIMB 8594 / NRRL 2338</strain>
    </source>
</reference>
<feature type="chain" id="PRO_1000018774" description="Phosphoribosylaminoimidazole-succinocarboxamide synthase">
    <location>
        <begin position="1"/>
        <end position="297"/>
    </location>
</feature>
<name>PUR7_SACEN</name>
<keyword id="KW-0067">ATP-binding</keyword>
<keyword id="KW-0436">Ligase</keyword>
<keyword id="KW-0547">Nucleotide-binding</keyword>
<keyword id="KW-0658">Purine biosynthesis</keyword>
<keyword id="KW-1185">Reference proteome</keyword>
<comment type="catalytic activity">
    <reaction evidence="1">
        <text>5-amino-1-(5-phospho-D-ribosyl)imidazole-4-carboxylate + L-aspartate + ATP = (2S)-2-[5-amino-1-(5-phospho-beta-D-ribosyl)imidazole-4-carboxamido]succinate + ADP + phosphate + 2 H(+)</text>
        <dbReference type="Rhea" id="RHEA:22628"/>
        <dbReference type="ChEBI" id="CHEBI:15378"/>
        <dbReference type="ChEBI" id="CHEBI:29991"/>
        <dbReference type="ChEBI" id="CHEBI:30616"/>
        <dbReference type="ChEBI" id="CHEBI:43474"/>
        <dbReference type="ChEBI" id="CHEBI:58443"/>
        <dbReference type="ChEBI" id="CHEBI:77657"/>
        <dbReference type="ChEBI" id="CHEBI:456216"/>
        <dbReference type="EC" id="6.3.2.6"/>
    </reaction>
</comment>
<comment type="pathway">
    <text evidence="1">Purine metabolism; IMP biosynthesis via de novo pathway; 5-amino-1-(5-phospho-D-ribosyl)imidazole-4-carboxamide from 5-amino-1-(5-phospho-D-ribosyl)imidazole-4-carboxylate: step 1/2.</text>
</comment>
<comment type="similarity">
    <text evidence="1">Belongs to the SAICAR synthetase family.</text>
</comment>
<proteinExistence type="inferred from homology"/>
<organism>
    <name type="scientific">Saccharopolyspora erythraea (strain ATCC 11635 / DSM 40517 / JCM 4748 / NBRC 13426 / NCIMB 8594 / NRRL 2338)</name>
    <dbReference type="NCBI Taxonomy" id="405948"/>
    <lineage>
        <taxon>Bacteria</taxon>
        <taxon>Bacillati</taxon>
        <taxon>Actinomycetota</taxon>
        <taxon>Actinomycetes</taxon>
        <taxon>Pseudonocardiales</taxon>
        <taxon>Pseudonocardiaceae</taxon>
        <taxon>Saccharopolyspora</taxon>
    </lineage>
</organism>